<name>PSBA_GRATL</name>
<reference key="1">
    <citation type="journal article" date="2004" name="J. Mol. Evol.">
        <title>Comparative analysis of the complete plastid genome sequence of the red alga Gracilaria tenuistipitata var. liui provides insights into the evolution of rhodoplasts and their relationship to other plastids.</title>
        <authorList>
            <person name="Hagopian J.C."/>
            <person name="Reis M."/>
            <person name="Kitajima J.P."/>
            <person name="Bhattacharya D."/>
            <person name="de Oliveira M.C."/>
        </authorList>
    </citation>
    <scope>NUCLEOTIDE SEQUENCE [LARGE SCALE GENOMIC DNA]</scope>
</reference>
<gene>
    <name evidence="1" type="primary">psbA</name>
    <name type="ordered locus">Grc000024</name>
</gene>
<feature type="chain" id="PRO_0000316510" description="Photosystem II protein D1" evidence="1">
    <location>
        <begin position="1"/>
        <end position="344"/>
    </location>
</feature>
<feature type="propeptide" id="PRO_0000316511" evidence="1">
    <location>
        <begin position="345"/>
        <end position="360"/>
    </location>
</feature>
<feature type="transmembrane region" description="Helical" evidence="1">
    <location>
        <begin position="29"/>
        <end position="46"/>
    </location>
</feature>
<feature type="transmembrane region" description="Helical" evidence="1">
    <location>
        <begin position="118"/>
        <end position="133"/>
    </location>
</feature>
<feature type="transmembrane region" description="Helical" evidence="1">
    <location>
        <begin position="142"/>
        <end position="156"/>
    </location>
</feature>
<feature type="transmembrane region" description="Helical" evidence="1">
    <location>
        <begin position="197"/>
        <end position="218"/>
    </location>
</feature>
<feature type="transmembrane region" description="Helical" evidence="1">
    <location>
        <begin position="274"/>
        <end position="288"/>
    </location>
</feature>
<feature type="binding site" description="axial binding residue" evidence="1">
    <location>
        <position position="118"/>
    </location>
    <ligand>
        <name>chlorophyll a</name>
        <dbReference type="ChEBI" id="CHEBI:58416"/>
        <label>ChlzD1</label>
    </ligand>
    <ligandPart>
        <name>Mg</name>
        <dbReference type="ChEBI" id="CHEBI:25107"/>
    </ligandPart>
</feature>
<feature type="binding site" evidence="1">
    <location>
        <position position="126"/>
    </location>
    <ligand>
        <name>pheophytin a</name>
        <dbReference type="ChEBI" id="CHEBI:136840"/>
        <label>D1</label>
    </ligand>
</feature>
<feature type="binding site" evidence="1">
    <location>
        <position position="170"/>
    </location>
    <ligand>
        <name>[CaMn4O5] cluster</name>
        <dbReference type="ChEBI" id="CHEBI:189552"/>
    </ligand>
</feature>
<feature type="binding site" evidence="1">
    <location>
        <position position="189"/>
    </location>
    <ligand>
        <name>[CaMn4O5] cluster</name>
        <dbReference type="ChEBI" id="CHEBI:189552"/>
    </ligand>
</feature>
<feature type="binding site" description="axial binding residue" evidence="1">
    <location>
        <position position="198"/>
    </location>
    <ligand>
        <name>chlorophyll a</name>
        <dbReference type="ChEBI" id="CHEBI:58416"/>
        <label>PD1</label>
    </ligand>
    <ligandPart>
        <name>Mg</name>
        <dbReference type="ChEBI" id="CHEBI:25107"/>
    </ligandPart>
</feature>
<feature type="binding site" evidence="1">
    <location>
        <position position="215"/>
    </location>
    <ligand>
        <name>a quinone</name>
        <dbReference type="ChEBI" id="CHEBI:132124"/>
        <label>B</label>
    </ligand>
</feature>
<feature type="binding site" evidence="1">
    <location>
        <position position="215"/>
    </location>
    <ligand>
        <name>Fe cation</name>
        <dbReference type="ChEBI" id="CHEBI:24875"/>
        <note>ligand shared with heterodimeric partner</note>
    </ligand>
</feature>
<feature type="binding site" evidence="1">
    <location>
        <begin position="264"/>
        <end position="265"/>
    </location>
    <ligand>
        <name>a quinone</name>
        <dbReference type="ChEBI" id="CHEBI:132124"/>
        <label>B</label>
    </ligand>
</feature>
<feature type="binding site" evidence="1">
    <location>
        <position position="272"/>
    </location>
    <ligand>
        <name>Fe cation</name>
        <dbReference type="ChEBI" id="CHEBI:24875"/>
        <note>ligand shared with heterodimeric partner</note>
    </ligand>
</feature>
<feature type="binding site" evidence="1">
    <location>
        <position position="332"/>
    </location>
    <ligand>
        <name>[CaMn4O5] cluster</name>
        <dbReference type="ChEBI" id="CHEBI:189552"/>
    </ligand>
</feature>
<feature type="binding site" evidence="1">
    <location>
        <position position="333"/>
    </location>
    <ligand>
        <name>[CaMn4O5] cluster</name>
        <dbReference type="ChEBI" id="CHEBI:189552"/>
    </ligand>
</feature>
<feature type="binding site" evidence="1">
    <location>
        <position position="342"/>
    </location>
    <ligand>
        <name>[CaMn4O5] cluster</name>
        <dbReference type="ChEBI" id="CHEBI:189552"/>
    </ligand>
</feature>
<feature type="binding site" evidence="1">
    <location>
        <position position="344"/>
    </location>
    <ligand>
        <name>[CaMn4O5] cluster</name>
        <dbReference type="ChEBI" id="CHEBI:189552"/>
    </ligand>
</feature>
<feature type="site" description="Tyrosine radical intermediate" evidence="1">
    <location>
        <position position="161"/>
    </location>
</feature>
<feature type="site" description="Stabilizes free radical intermediate" evidence="1">
    <location>
        <position position="190"/>
    </location>
</feature>
<feature type="site" description="Cleavage; by CTPA" evidence="1">
    <location>
        <begin position="344"/>
        <end position="345"/>
    </location>
</feature>
<sequence>MTATLERRESASLWERFCTWITSTENRLYIGWFGVLMIPTLLTATSVFIIAFVAAPPVDIDGIREPVAGSLLYGNNIISGAIIPSSAAIGIHFYPIWEAASLDEWLYNGGPYQLIVLHFLLGVSCYIGREWELSYRLGMRPWISVAFTAPVAAAAAVFLVYPIGQGSFSDGMPLGISGTFNFMLVFQAEHNILMHPFHQLGVAGVFGGSLFSAMHGSLVTSSLIRETTENESANNGYKFGQEEETYNIVAAHGYFGRLIFQYASFNNSRSLHFFLGLWPVVGIWFTAMSVSTMAFNLNGFNFNQSVVDSQGRVINTWADILNRANLGMEVMHERNAHNFPLDLASSNSLPVSLVAPSVNG</sequence>
<organism>
    <name type="scientific">Gracilaria tenuistipitata var. liui</name>
    <name type="common">Red alga</name>
    <dbReference type="NCBI Taxonomy" id="285951"/>
    <lineage>
        <taxon>Eukaryota</taxon>
        <taxon>Rhodophyta</taxon>
        <taxon>Florideophyceae</taxon>
        <taxon>Rhodymeniophycidae</taxon>
        <taxon>Gracilariales</taxon>
        <taxon>Gracilariaceae</taxon>
        <taxon>Gracilaria</taxon>
        <taxon>Gracilaria tenuistipitata</taxon>
    </lineage>
</organism>
<accession>Q6B929</accession>
<proteinExistence type="inferred from homology"/>
<keyword id="KW-0106">Calcium</keyword>
<keyword id="KW-0148">Chlorophyll</keyword>
<keyword id="KW-0150">Chloroplast</keyword>
<keyword id="KW-0157">Chromophore</keyword>
<keyword id="KW-0249">Electron transport</keyword>
<keyword id="KW-0359">Herbicide resistance</keyword>
<keyword id="KW-0408">Iron</keyword>
<keyword id="KW-0460">Magnesium</keyword>
<keyword id="KW-0464">Manganese</keyword>
<keyword id="KW-0472">Membrane</keyword>
<keyword id="KW-0479">Metal-binding</keyword>
<keyword id="KW-0560">Oxidoreductase</keyword>
<keyword id="KW-0602">Photosynthesis</keyword>
<keyword id="KW-0604">Photosystem II</keyword>
<keyword id="KW-0934">Plastid</keyword>
<keyword id="KW-0793">Thylakoid</keyword>
<keyword id="KW-0812">Transmembrane</keyword>
<keyword id="KW-1133">Transmembrane helix</keyword>
<keyword id="KW-0813">Transport</keyword>
<evidence type="ECO:0000255" key="1">
    <source>
        <dbReference type="HAMAP-Rule" id="MF_01379"/>
    </source>
</evidence>
<comment type="function">
    <text evidence="1">Photosystem II (PSII) is a light-driven water:plastoquinone oxidoreductase that uses light energy to abstract electrons from H(2)O, generating O(2) and a proton gradient subsequently used for ATP formation. It consists of a core antenna complex that captures photons, and an electron transfer chain that converts photonic excitation into a charge separation. The D1/D2 (PsbA/PsbD) reaction center heterodimer binds P680, the primary electron donor of PSII as well as several subsequent electron acceptors.</text>
</comment>
<comment type="catalytic activity">
    <reaction evidence="1">
        <text>2 a plastoquinone + 4 hnu + 2 H2O = 2 a plastoquinol + O2</text>
        <dbReference type="Rhea" id="RHEA:36359"/>
        <dbReference type="Rhea" id="RHEA-COMP:9561"/>
        <dbReference type="Rhea" id="RHEA-COMP:9562"/>
        <dbReference type="ChEBI" id="CHEBI:15377"/>
        <dbReference type="ChEBI" id="CHEBI:15379"/>
        <dbReference type="ChEBI" id="CHEBI:17757"/>
        <dbReference type="ChEBI" id="CHEBI:30212"/>
        <dbReference type="ChEBI" id="CHEBI:62192"/>
        <dbReference type="EC" id="1.10.3.9"/>
    </reaction>
</comment>
<comment type="cofactor">
    <text evidence="1">The D1/D2 heterodimer binds P680, chlorophylls that are the primary electron donor of PSII, and subsequent electron acceptors. It shares a non-heme iron and each subunit binds pheophytin, quinone, additional chlorophylls, carotenoids and lipids. D1 provides most of the ligands for the Mn4-Ca-O5 cluster of the oxygen-evolving complex (OEC). There is also a Cl(-1) ion associated with D1 and D2, which is required for oxygen evolution. The PSII complex binds additional chlorophylls, carotenoids and specific lipids.</text>
</comment>
<comment type="subunit">
    <text evidence="1">PSII is composed of 1 copy each of membrane proteins PsbA, PsbB, PsbC, PsbD, PsbE, PsbF, PsbH, PsbI, PsbJ, PsbK, PsbL, PsbM, PsbT, PsbX, PsbY, PsbZ, Psb30/Ycf12, at least 3 peripheral proteins of the oxygen-evolving complex and a large number of cofactors. It forms dimeric complexes.</text>
</comment>
<comment type="subcellular location">
    <subcellularLocation>
        <location evidence="1">Plastid</location>
        <location evidence="1">Chloroplast thylakoid membrane</location>
        <topology evidence="1">Multi-pass membrane protein</topology>
    </subcellularLocation>
</comment>
<comment type="PTM">
    <text evidence="1">Tyr-161 forms a radical intermediate that is referred to as redox-active TyrZ, YZ or Y-Z.</text>
</comment>
<comment type="PTM">
    <text evidence="1">C-terminally processed by CTPA; processing is essential to allow assembly of the oxygen-evolving complex and thus photosynthetic growth.</text>
</comment>
<comment type="miscellaneous">
    <text evidence="1">2 of the reaction center chlorophylls (ChlD1 and ChlD2) are entirely coordinated by water.</text>
</comment>
<comment type="miscellaneous">
    <text evidence="1">Herbicides such as atrazine, BNT, diuron or ioxynil bind in the Q(B) binding site and block subsequent electron transfer.</text>
</comment>
<comment type="similarity">
    <text evidence="1">Belongs to the reaction center PufL/M/PsbA/D family.</text>
</comment>
<dbReference type="EC" id="1.10.3.9" evidence="1"/>
<dbReference type="EMBL" id="AY673996">
    <property type="protein sequence ID" value="AAT79606.1"/>
    <property type="molecule type" value="Genomic_DNA"/>
</dbReference>
<dbReference type="RefSeq" id="YP_063531.1">
    <property type="nucleotide sequence ID" value="NC_006137.1"/>
</dbReference>
<dbReference type="SMR" id="Q6B929"/>
<dbReference type="GeneID" id="2944167"/>
<dbReference type="GO" id="GO:0009535">
    <property type="term" value="C:chloroplast thylakoid membrane"/>
    <property type="evidence" value="ECO:0007669"/>
    <property type="project" value="UniProtKB-SubCell"/>
</dbReference>
<dbReference type="GO" id="GO:0009523">
    <property type="term" value="C:photosystem II"/>
    <property type="evidence" value="ECO:0007669"/>
    <property type="project" value="UniProtKB-KW"/>
</dbReference>
<dbReference type="GO" id="GO:0016168">
    <property type="term" value="F:chlorophyll binding"/>
    <property type="evidence" value="ECO:0007669"/>
    <property type="project" value="UniProtKB-UniRule"/>
</dbReference>
<dbReference type="GO" id="GO:0045156">
    <property type="term" value="F:electron transporter, transferring electrons within the cyclic electron transport pathway of photosynthesis activity"/>
    <property type="evidence" value="ECO:0007669"/>
    <property type="project" value="InterPro"/>
</dbReference>
<dbReference type="GO" id="GO:0005506">
    <property type="term" value="F:iron ion binding"/>
    <property type="evidence" value="ECO:0007669"/>
    <property type="project" value="UniProtKB-UniRule"/>
</dbReference>
<dbReference type="GO" id="GO:0016682">
    <property type="term" value="F:oxidoreductase activity, acting on diphenols and related substances as donors, oxygen as acceptor"/>
    <property type="evidence" value="ECO:0007669"/>
    <property type="project" value="UniProtKB-UniRule"/>
</dbReference>
<dbReference type="GO" id="GO:0009772">
    <property type="term" value="P:photosynthetic electron transport in photosystem II"/>
    <property type="evidence" value="ECO:0007669"/>
    <property type="project" value="InterPro"/>
</dbReference>
<dbReference type="GO" id="GO:0009635">
    <property type="term" value="P:response to herbicide"/>
    <property type="evidence" value="ECO:0007669"/>
    <property type="project" value="UniProtKB-KW"/>
</dbReference>
<dbReference type="CDD" id="cd09289">
    <property type="entry name" value="Photosystem-II_D1"/>
    <property type="match status" value="1"/>
</dbReference>
<dbReference type="FunFam" id="1.20.85.10:FF:000002">
    <property type="entry name" value="Photosystem II protein D1"/>
    <property type="match status" value="1"/>
</dbReference>
<dbReference type="Gene3D" id="1.20.85.10">
    <property type="entry name" value="Photosystem II protein D1-like"/>
    <property type="match status" value="1"/>
</dbReference>
<dbReference type="HAMAP" id="MF_01379">
    <property type="entry name" value="PSII_PsbA_D1"/>
    <property type="match status" value="1"/>
</dbReference>
<dbReference type="InterPro" id="IPR055266">
    <property type="entry name" value="D1/D2"/>
</dbReference>
<dbReference type="InterPro" id="IPR036854">
    <property type="entry name" value="Photo_II_D1/D2_sf"/>
</dbReference>
<dbReference type="InterPro" id="IPR000484">
    <property type="entry name" value="Photo_RC_L/M"/>
</dbReference>
<dbReference type="InterPro" id="IPR055265">
    <property type="entry name" value="Photo_RC_L/M_CS"/>
</dbReference>
<dbReference type="InterPro" id="IPR005867">
    <property type="entry name" value="PSII_D1"/>
</dbReference>
<dbReference type="NCBIfam" id="TIGR01151">
    <property type="entry name" value="psbA"/>
    <property type="match status" value="1"/>
</dbReference>
<dbReference type="PANTHER" id="PTHR33149:SF12">
    <property type="entry name" value="PHOTOSYSTEM II D2 PROTEIN"/>
    <property type="match status" value="1"/>
</dbReference>
<dbReference type="PANTHER" id="PTHR33149">
    <property type="entry name" value="PHOTOSYSTEM II PROTEIN D1"/>
    <property type="match status" value="1"/>
</dbReference>
<dbReference type="Pfam" id="PF00124">
    <property type="entry name" value="Photo_RC"/>
    <property type="match status" value="1"/>
</dbReference>
<dbReference type="PRINTS" id="PR00256">
    <property type="entry name" value="REACTNCENTRE"/>
</dbReference>
<dbReference type="SUPFAM" id="SSF81483">
    <property type="entry name" value="Bacterial photosystem II reaction centre, L and M subunits"/>
    <property type="match status" value="1"/>
</dbReference>
<dbReference type="PROSITE" id="PS00244">
    <property type="entry name" value="REACTION_CENTER"/>
    <property type="match status" value="1"/>
</dbReference>
<geneLocation type="chloroplast"/>
<protein>
    <recommendedName>
        <fullName evidence="1">Photosystem II protein D1</fullName>
        <shortName evidence="1">PSII D1 protein</shortName>
        <ecNumber evidence="1">1.10.3.9</ecNumber>
    </recommendedName>
    <alternativeName>
        <fullName evidence="1">Photosystem II Q(B) protein</fullName>
    </alternativeName>
</protein>